<name>SYA_MYCBO</name>
<gene>
    <name evidence="1" type="primary">alaS</name>
    <name type="ordered locus">BQ2027_MB2585C</name>
</gene>
<comment type="function">
    <text evidence="1">Catalyzes the attachment of alanine to tRNA(Ala) in a two-step reaction: alanine is first activated by ATP to form Ala-AMP and then transferred to the acceptor end of tRNA(Ala). Also edits incorrectly charged Ser-tRNA(Ala) and Gly-tRNA(Ala) via its editing domain.</text>
</comment>
<comment type="catalytic activity">
    <reaction evidence="1">
        <text>tRNA(Ala) + L-alanine + ATP = L-alanyl-tRNA(Ala) + AMP + diphosphate</text>
        <dbReference type="Rhea" id="RHEA:12540"/>
        <dbReference type="Rhea" id="RHEA-COMP:9657"/>
        <dbReference type="Rhea" id="RHEA-COMP:9923"/>
        <dbReference type="ChEBI" id="CHEBI:30616"/>
        <dbReference type="ChEBI" id="CHEBI:33019"/>
        <dbReference type="ChEBI" id="CHEBI:57972"/>
        <dbReference type="ChEBI" id="CHEBI:78442"/>
        <dbReference type="ChEBI" id="CHEBI:78497"/>
        <dbReference type="ChEBI" id="CHEBI:456215"/>
        <dbReference type="EC" id="6.1.1.7"/>
    </reaction>
</comment>
<comment type="cofactor">
    <cofactor evidence="1">
        <name>Zn(2+)</name>
        <dbReference type="ChEBI" id="CHEBI:29105"/>
    </cofactor>
    <text evidence="1">Binds 1 zinc ion per subunit.</text>
</comment>
<comment type="subcellular location">
    <subcellularLocation>
        <location evidence="1">Cytoplasm</location>
    </subcellularLocation>
</comment>
<comment type="domain">
    <text evidence="1">Consists of three domains; the N-terminal catalytic domain, the editing domain and the C-terminal C-Ala domain. The editing domain removes incorrectly charged amino acids, while the C-Ala domain, along with tRNA(Ala), serves as a bridge to cooperatively bring together the editing and aminoacylation centers thus stimulating deacylation of misacylated tRNAs.</text>
</comment>
<comment type="similarity">
    <text evidence="1">Belongs to the class-II aminoacyl-tRNA synthetase family.</text>
</comment>
<proteinExistence type="inferred from homology"/>
<organism>
    <name type="scientific">Mycobacterium bovis (strain ATCC BAA-935 / AF2122/97)</name>
    <dbReference type="NCBI Taxonomy" id="233413"/>
    <lineage>
        <taxon>Bacteria</taxon>
        <taxon>Bacillati</taxon>
        <taxon>Actinomycetota</taxon>
        <taxon>Actinomycetes</taxon>
        <taxon>Mycobacteriales</taxon>
        <taxon>Mycobacteriaceae</taxon>
        <taxon>Mycobacterium</taxon>
        <taxon>Mycobacterium tuberculosis complex</taxon>
    </lineage>
</organism>
<feature type="chain" id="PRO_0000075144" description="Alanine--tRNA ligase">
    <location>
        <begin position="1"/>
        <end position="904"/>
    </location>
</feature>
<feature type="binding site" evidence="1">
    <location>
        <position position="584"/>
    </location>
    <ligand>
        <name>Zn(2+)</name>
        <dbReference type="ChEBI" id="CHEBI:29105"/>
    </ligand>
</feature>
<feature type="binding site" evidence="1">
    <location>
        <position position="588"/>
    </location>
    <ligand>
        <name>Zn(2+)</name>
        <dbReference type="ChEBI" id="CHEBI:29105"/>
    </ligand>
</feature>
<feature type="binding site" evidence="1">
    <location>
        <position position="687"/>
    </location>
    <ligand>
        <name>Zn(2+)</name>
        <dbReference type="ChEBI" id="CHEBI:29105"/>
    </ligand>
</feature>
<feature type="binding site" evidence="1">
    <location>
        <position position="691"/>
    </location>
    <ligand>
        <name>Zn(2+)</name>
        <dbReference type="ChEBI" id="CHEBI:29105"/>
    </ligand>
</feature>
<keyword id="KW-0030">Aminoacyl-tRNA synthetase</keyword>
<keyword id="KW-0067">ATP-binding</keyword>
<keyword id="KW-0963">Cytoplasm</keyword>
<keyword id="KW-0436">Ligase</keyword>
<keyword id="KW-0479">Metal-binding</keyword>
<keyword id="KW-0547">Nucleotide-binding</keyword>
<keyword id="KW-0648">Protein biosynthesis</keyword>
<keyword id="KW-1185">Reference proteome</keyword>
<keyword id="KW-0694">RNA-binding</keyword>
<keyword id="KW-0820">tRNA-binding</keyword>
<keyword id="KW-0862">Zinc</keyword>
<accession>Q7TYB1</accession>
<accession>A0A1R3Y1J4</accession>
<accession>X2BL31</accession>
<reference key="1">
    <citation type="journal article" date="2003" name="Proc. Natl. Acad. Sci. U.S.A.">
        <title>The complete genome sequence of Mycobacterium bovis.</title>
        <authorList>
            <person name="Garnier T."/>
            <person name="Eiglmeier K."/>
            <person name="Camus J.-C."/>
            <person name="Medina N."/>
            <person name="Mansoor H."/>
            <person name="Pryor M."/>
            <person name="Duthoy S."/>
            <person name="Grondin S."/>
            <person name="Lacroix C."/>
            <person name="Monsempe C."/>
            <person name="Simon S."/>
            <person name="Harris B."/>
            <person name="Atkin R."/>
            <person name="Doggett J."/>
            <person name="Mayes R."/>
            <person name="Keating L."/>
            <person name="Wheeler P.R."/>
            <person name="Parkhill J."/>
            <person name="Barrell B.G."/>
            <person name="Cole S.T."/>
            <person name="Gordon S.V."/>
            <person name="Hewinson R.G."/>
        </authorList>
    </citation>
    <scope>NUCLEOTIDE SEQUENCE [LARGE SCALE GENOMIC DNA]</scope>
    <source>
        <strain>ATCC BAA-935 / AF2122/97</strain>
    </source>
</reference>
<reference key="2">
    <citation type="journal article" date="2017" name="Genome Announc.">
        <title>Updated reference genome sequence and annotation of Mycobacterium bovis AF2122/97.</title>
        <authorList>
            <person name="Malone K.M."/>
            <person name="Farrell D."/>
            <person name="Stuber T.P."/>
            <person name="Schubert O.T."/>
            <person name="Aebersold R."/>
            <person name="Robbe-Austerman S."/>
            <person name="Gordon S.V."/>
        </authorList>
    </citation>
    <scope>NUCLEOTIDE SEQUENCE [LARGE SCALE GENOMIC DNA]</scope>
    <scope>GENOME REANNOTATION</scope>
    <source>
        <strain>ATCC BAA-935 / AF2122/97</strain>
    </source>
</reference>
<dbReference type="EC" id="6.1.1.7" evidence="1"/>
<dbReference type="EMBL" id="LT708304">
    <property type="protein sequence ID" value="SIU01203.1"/>
    <property type="molecule type" value="Genomic_DNA"/>
</dbReference>
<dbReference type="RefSeq" id="NP_856231.1">
    <property type="nucleotide sequence ID" value="NC_002945.3"/>
</dbReference>
<dbReference type="RefSeq" id="WP_003413201.1">
    <property type="nucleotide sequence ID" value="NC_002945.4"/>
</dbReference>
<dbReference type="SMR" id="Q7TYB1"/>
<dbReference type="KEGG" id="mbo:BQ2027_MB2585C"/>
<dbReference type="PATRIC" id="fig|233413.5.peg.2843"/>
<dbReference type="Proteomes" id="UP000001419">
    <property type="component" value="Chromosome"/>
</dbReference>
<dbReference type="GO" id="GO:0005829">
    <property type="term" value="C:cytosol"/>
    <property type="evidence" value="ECO:0007669"/>
    <property type="project" value="TreeGrafter"/>
</dbReference>
<dbReference type="GO" id="GO:0004813">
    <property type="term" value="F:alanine-tRNA ligase activity"/>
    <property type="evidence" value="ECO:0007669"/>
    <property type="project" value="UniProtKB-UniRule"/>
</dbReference>
<dbReference type="GO" id="GO:0002161">
    <property type="term" value="F:aminoacyl-tRNA deacylase activity"/>
    <property type="evidence" value="ECO:0007669"/>
    <property type="project" value="TreeGrafter"/>
</dbReference>
<dbReference type="GO" id="GO:0005524">
    <property type="term" value="F:ATP binding"/>
    <property type="evidence" value="ECO:0007669"/>
    <property type="project" value="UniProtKB-UniRule"/>
</dbReference>
<dbReference type="GO" id="GO:0000049">
    <property type="term" value="F:tRNA binding"/>
    <property type="evidence" value="ECO:0007669"/>
    <property type="project" value="UniProtKB-KW"/>
</dbReference>
<dbReference type="GO" id="GO:0008270">
    <property type="term" value="F:zinc ion binding"/>
    <property type="evidence" value="ECO:0007669"/>
    <property type="project" value="UniProtKB-UniRule"/>
</dbReference>
<dbReference type="GO" id="GO:0006419">
    <property type="term" value="P:alanyl-tRNA aminoacylation"/>
    <property type="evidence" value="ECO:0007669"/>
    <property type="project" value="UniProtKB-UniRule"/>
</dbReference>
<dbReference type="CDD" id="cd00673">
    <property type="entry name" value="AlaRS_core"/>
    <property type="match status" value="1"/>
</dbReference>
<dbReference type="FunFam" id="2.40.30.130:FF:000011">
    <property type="entry name" value="Alanine--tRNA ligase"/>
    <property type="match status" value="1"/>
</dbReference>
<dbReference type="FunFam" id="3.10.310.40:FF:000001">
    <property type="entry name" value="Alanine--tRNA ligase"/>
    <property type="match status" value="1"/>
</dbReference>
<dbReference type="FunFam" id="3.30.54.20:FF:000001">
    <property type="entry name" value="Alanine--tRNA ligase"/>
    <property type="match status" value="1"/>
</dbReference>
<dbReference type="FunFam" id="3.30.930.10:FF:000004">
    <property type="entry name" value="Alanine--tRNA ligase"/>
    <property type="match status" value="1"/>
</dbReference>
<dbReference type="FunFam" id="3.30.980.10:FF:000004">
    <property type="entry name" value="Alanine--tRNA ligase, cytoplasmic"/>
    <property type="match status" value="1"/>
</dbReference>
<dbReference type="Gene3D" id="2.40.30.130">
    <property type="match status" value="1"/>
</dbReference>
<dbReference type="Gene3D" id="3.10.310.40">
    <property type="match status" value="1"/>
</dbReference>
<dbReference type="Gene3D" id="3.30.54.20">
    <property type="match status" value="1"/>
</dbReference>
<dbReference type="Gene3D" id="6.10.250.550">
    <property type="match status" value="1"/>
</dbReference>
<dbReference type="Gene3D" id="3.30.930.10">
    <property type="entry name" value="Bira Bifunctional Protein, Domain 2"/>
    <property type="match status" value="1"/>
</dbReference>
<dbReference type="Gene3D" id="3.30.980.10">
    <property type="entry name" value="Threonyl-trna Synthetase, Chain A, domain 2"/>
    <property type="match status" value="1"/>
</dbReference>
<dbReference type="HAMAP" id="MF_00036_B">
    <property type="entry name" value="Ala_tRNA_synth_B"/>
    <property type="match status" value="1"/>
</dbReference>
<dbReference type="InterPro" id="IPR045864">
    <property type="entry name" value="aa-tRNA-synth_II/BPL/LPL"/>
</dbReference>
<dbReference type="InterPro" id="IPR002318">
    <property type="entry name" value="Ala-tRNA-lgiase_IIc"/>
</dbReference>
<dbReference type="InterPro" id="IPR018162">
    <property type="entry name" value="Ala-tRNA-ligase_IIc_anticod-bd"/>
</dbReference>
<dbReference type="InterPro" id="IPR018165">
    <property type="entry name" value="Ala-tRNA-synth_IIc_core"/>
</dbReference>
<dbReference type="InterPro" id="IPR018164">
    <property type="entry name" value="Ala-tRNA-synth_IIc_N"/>
</dbReference>
<dbReference type="InterPro" id="IPR050058">
    <property type="entry name" value="Ala-tRNA_ligase"/>
</dbReference>
<dbReference type="InterPro" id="IPR023033">
    <property type="entry name" value="Ala_tRNA_ligase_euk/bac"/>
</dbReference>
<dbReference type="InterPro" id="IPR003156">
    <property type="entry name" value="DHHA1_dom"/>
</dbReference>
<dbReference type="InterPro" id="IPR018163">
    <property type="entry name" value="Thr/Ala-tRNA-synth_IIc_edit"/>
</dbReference>
<dbReference type="InterPro" id="IPR009000">
    <property type="entry name" value="Transl_B-barrel_sf"/>
</dbReference>
<dbReference type="InterPro" id="IPR012947">
    <property type="entry name" value="tRNA_SAD"/>
</dbReference>
<dbReference type="NCBIfam" id="TIGR00344">
    <property type="entry name" value="alaS"/>
    <property type="match status" value="1"/>
</dbReference>
<dbReference type="PANTHER" id="PTHR11777:SF9">
    <property type="entry name" value="ALANINE--TRNA LIGASE, CYTOPLASMIC"/>
    <property type="match status" value="1"/>
</dbReference>
<dbReference type="PANTHER" id="PTHR11777">
    <property type="entry name" value="ALANYL-TRNA SYNTHETASE"/>
    <property type="match status" value="1"/>
</dbReference>
<dbReference type="Pfam" id="PF02272">
    <property type="entry name" value="DHHA1"/>
    <property type="match status" value="1"/>
</dbReference>
<dbReference type="Pfam" id="PF01411">
    <property type="entry name" value="tRNA-synt_2c"/>
    <property type="match status" value="1"/>
</dbReference>
<dbReference type="Pfam" id="PF07973">
    <property type="entry name" value="tRNA_SAD"/>
    <property type="match status" value="1"/>
</dbReference>
<dbReference type="PRINTS" id="PR00980">
    <property type="entry name" value="TRNASYNTHALA"/>
</dbReference>
<dbReference type="SMART" id="SM00863">
    <property type="entry name" value="tRNA_SAD"/>
    <property type="match status" value="1"/>
</dbReference>
<dbReference type="SUPFAM" id="SSF55681">
    <property type="entry name" value="Class II aaRS and biotin synthetases"/>
    <property type="match status" value="1"/>
</dbReference>
<dbReference type="SUPFAM" id="SSF101353">
    <property type="entry name" value="Putative anticodon-binding domain of alanyl-tRNA synthetase (AlaRS)"/>
    <property type="match status" value="1"/>
</dbReference>
<dbReference type="SUPFAM" id="SSF55186">
    <property type="entry name" value="ThrRS/AlaRS common domain"/>
    <property type="match status" value="1"/>
</dbReference>
<dbReference type="SUPFAM" id="SSF50447">
    <property type="entry name" value="Translation proteins"/>
    <property type="match status" value="1"/>
</dbReference>
<dbReference type="PROSITE" id="PS50860">
    <property type="entry name" value="AA_TRNA_LIGASE_II_ALA"/>
    <property type="match status" value="1"/>
</dbReference>
<sequence length="904" mass="97343">MQTHEIRKRFLDHFVKAGHTEVPSASVILDDPNLLFVNAGMVQFVPFFLGQRTPPYPTATSIQKCIRTPDIDEVGITTRHNTFFQMAGNFSFGDYFKRGAIELAWALLTNSLAAGGYGLDPERIWTTVYFDDDEAVRLWQEVAGLPAERIQRRGMADNYWSMGIPGPCGPSSEIYYDRGPEFGPAGGPIVSEDRYLEVWNLVFMQNERGEGTTKEDYQILGPLPRNNIDTGMGVERIALVLQDVHNVYETDLLRPVIDTVARVAARAYDVGNHEDDVRYRIIADHSRTAAILIGDGVSPGNDGRGYVLRRLLRRVIRSAKLLGIDAAIVGDLMATVRNAMGPSYPELVADFERISRIAVAEETAFNRTLASGSRLFEEVASSTKKSGATVLSGSDAFTLHDTYGFPIELTLEMAAETGLQVDEIGFRELMAEQRRRAKADAAARKHAHADLSAYRELVDAGATEFTGFDELRSQARILGIFVDGKRVPVVAHGVAGGAGEGQRVELVLDRTPLYAESGGQIADEGTISGTGSSEAARAAVTDVQKIAKTLWVHRVNVESGEFVEGDTVIAAVDPGWRRGATQGHSGTHMVHAALRQVLGPNAVQAGSLNRPGYLRFDFNWQGPLTDDQRTQVEEVTNEAVQADFEVRTFTEQLDKAKAMGAIALFGESYPDEVRVVEMGGPFSLELCGGTHVSNTAQIGPVTILGESSIGSGVRRVEAYVGLDSFRHLAKERALMAGLASSLKVPSEEVPARVANLVERLRAAEKELERVRMASARAAATNAAAGAQRIGNVRLVAQRMSGGMTAADLRSLIGDIRGKLGSEPAVVALIAEGESQTVPYAVAANPAAQDLGIRANDLVKQLAVAVEGRGGGKADLAQGSGKNPTGIDAALDAVRSEIAVIARVG</sequence>
<evidence type="ECO:0000255" key="1">
    <source>
        <dbReference type="HAMAP-Rule" id="MF_00036"/>
    </source>
</evidence>
<protein>
    <recommendedName>
        <fullName evidence="1">Alanine--tRNA ligase</fullName>
        <ecNumber evidence="1">6.1.1.7</ecNumber>
    </recommendedName>
    <alternativeName>
        <fullName evidence="1">Alanyl-tRNA synthetase</fullName>
        <shortName evidence="1">AlaRS</shortName>
    </alternativeName>
</protein>